<reference key="1">
    <citation type="journal article" date="2001" name="Am. J. Primatol.">
        <title>Cloning, sequencing, and functional characterization of the vitamin D receptor in vitamin D-resistant New World primates.</title>
        <authorList>
            <person name="Chun R.F."/>
            <person name="Chen H."/>
            <person name="Boldrick L."/>
            <person name="Sweet C."/>
            <person name="Adams J.S."/>
        </authorList>
    </citation>
    <scope>NUCLEOTIDE SEQUENCE [MRNA]</scope>
</reference>
<comment type="function">
    <text evidence="1 2">Nuclear receptor for calcitriol, the active form of vitamin D3 which mediates the action of this vitamin on cells (By similarity). Enters the nucleus upon vitamin D3 binding where it forms heterodimers with the retinoid X receptor/RXR (By similarity). The VDR-RXR heterodimers bind to specific response elements on DNA and activate the transcription of vitamin D3-responsive target genes (By similarity). Plays a central role in calcium homeostasis (By similarity).</text>
</comment>
<comment type="subunit">
    <text evidence="1">Homodimer in the absence of bound vitamin D3. Heterodimer with RXRA after vitamin D3 binding. Interacts with MED1, NCOA1, NCOA2, NCOA3 and NCOA6 coactivators, leading to a strong increase of transcription of target genes. Interacts with the corepressor NCOR1. Interacts with SNW1. Interacts with IRX4, the interaction does not affect its transactivation activity.</text>
</comment>
<comment type="subcellular location">
    <subcellularLocation>
        <location evidence="1 3">Nucleus</location>
    </subcellularLocation>
    <subcellularLocation>
        <location evidence="1">Cytoplasm</location>
    </subcellularLocation>
    <text evidence="1">Localizes mainly to the nucleus. Translocated into the nucleus via both ligand-dependent and ligand-independent pathways; ligand-independent nuclear translocation is mediated by IPO4.</text>
</comment>
<comment type="domain">
    <text evidence="1">Composed of three domains: a modulating N-terminal domain, a DNA-binding domain and a C-terminal ligand-binding domain.</text>
</comment>
<comment type="domain">
    <text evidence="1">The 9aaTAD motif is a transactivation domain present in a large number of yeast and animal transcription factors.</text>
</comment>
<comment type="PTM">
    <text evidence="1">Ubiquitinated by UBR5, leading to its degradation: UBR5 specifically recognizes and binds ligand-bound VDR when it is not associated with coactivators (NCOAs). In presence of NCOAs, the UBR5-degron is not accessible, preventing its ubiquitination and degradation.</text>
</comment>
<comment type="similarity">
    <text evidence="6">Belongs to the nuclear hormone receptor family. NR1 subfamily.</text>
</comment>
<accession>Q95MH5</accession>
<organism>
    <name type="scientific">Saguinus oedipus</name>
    <name type="common">Cotton-top tamarin</name>
    <dbReference type="NCBI Taxonomy" id="9490"/>
    <lineage>
        <taxon>Eukaryota</taxon>
        <taxon>Metazoa</taxon>
        <taxon>Chordata</taxon>
        <taxon>Craniata</taxon>
        <taxon>Vertebrata</taxon>
        <taxon>Euteleostomi</taxon>
        <taxon>Mammalia</taxon>
        <taxon>Eutheria</taxon>
        <taxon>Euarchontoglires</taxon>
        <taxon>Primates</taxon>
        <taxon>Haplorrhini</taxon>
        <taxon>Platyrrhini</taxon>
        <taxon>Cebidae</taxon>
        <taxon>Callitrichinae</taxon>
        <taxon>Saguinus</taxon>
    </lineage>
</organism>
<name>VDR_SAGOE</name>
<sequence>MEAMAASTSLPDPGDFDRNVPRICGVCGDRATGFHFNAMTCEGCKGFFRRSMKRKALFTCPFNGDCRITKDNRRHCQACRLKRCVDIGMMKEFILTDEEVQRKREMILKRKEEEALKDSLRPKLSEEQQRIIAILLDAHHKTYDPTYSDFCQFRPPVRVNDGGGSHPSRPNSRHTPSFSGDSSSCCSDHYITSPDMMDSSSFSNLDLSEEDSDDPSLTLELSQLSMLPHLADLVSYSIQKVIGFAKMIPGFRDLTSEDQIVLLKSSAIEVIMLRSNESFTMDDMSWTCGNPDYKYRISDVTKAGHNLELIEPLIKFQVGLKKLNLHEEEHVLLMAICIVSPDRPGVQDAALIEAIQDRLSNTLQTYIRCRHPPPGSHLLYAKMIQKLADLRSLNEEHSKQYRCLSFQPESSMKLTPLVLEVFGNEIS</sequence>
<protein>
    <recommendedName>
        <fullName>Vitamin D3 receptor</fullName>
        <shortName>VDR</shortName>
    </recommendedName>
    <alternativeName>
        <fullName>1,25-dihydroxyvitamin D3 receptor</fullName>
    </alternativeName>
    <alternativeName>
        <fullName>Nuclear receptor subfamily 1 group I member 1</fullName>
    </alternativeName>
</protein>
<gene>
    <name type="primary">VDR</name>
    <name type="synonym">NR1I1</name>
</gene>
<dbReference type="EMBL" id="AF354232">
    <property type="protein sequence ID" value="AAK48863.1"/>
    <property type="molecule type" value="mRNA"/>
</dbReference>
<dbReference type="SMR" id="Q95MH5"/>
<dbReference type="GO" id="GO:0005737">
    <property type="term" value="C:cytoplasm"/>
    <property type="evidence" value="ECO:0007669"/>
    <property type="project" value="UniProtKB-SubCell"/>
</dbReference>
<dbReference type="GO" id="GO:0005654">
    <property type="term" value="C:nucleoplasm"/>
    <property type="evidence" value="ECO:0007669"/>
    <property type="project" value="UniProtKB-ARBA"/>
</dbReference>
<dbReference type="GO" id="GO:0004879">
    <property type="term" value="F:nuclear receptor activity"/>
    <property type="evidence" value="ECO:0000250"/>
    <property type="project" value="UniProtKB"/>
</dbReference>
<dbReference type="GO" id="GO:0070644">
    <property type="term" value="F:vitamin D response element binding"/>
    <property type="evidence" value="ECO:0007669"/>
    <property type="project" value="TreeGrafter"/>
</dbReference>
<dbReference type="GO" id="GO:0008270">
    <property type="term" value="F:zinc ion binding"/>
    <property type="evidence" value="ECO:0007669"/>
    <property type="project" value="UniProtKB-KW"/>
</dbReference>
<dbReference type="GO" id="GO:0030154">
    <property type="term" value="P:cell differentiation"/>
    <property type="evidence" value="ECO:0007669"/>
    <property type="project" value="TreeGrafter"/>
</dbReference>
<dbReference type="GO" id="GO:0000122">
    <property type="term" value="P:negative regulation of transcription by RNA polymerase II"/>
    <property type="evidence" value="ECO:0007669"/>
    <property type="project" value="TreeGrafter"/>
</dbReference>
<dbReference type="GO" id="GO:0045944">
    <property type="term" value="P:positive regulation of transcription by RNA polymerase II"/>
    <property type="evidence" value="ECO:0007669"/>
    <property type="project" value="TreeGrafter"/>
</dbReference>
<dbReference type="GO" id="GO:0070561">
    <property type="term" value="P:vitamin D receptor signaling pathway"/>
    <property type="evidence" value="ECO:0000250"/>
    <property type="project" value="UniProtKB"/>
</dbReference>
<dbReference type="CDD" id="cd06955">
    <property type="entry name" value="NR_DBD_VDR"/>
    <property type="match status" value="1"/>
</dbReference>
<dbReference type="CDD" id="cd06933">
    <property type="entry name" value="NR_LBD_VDR"/>
    <property type="match status" value="1"/>
</dbReference>
<dbReference type="FunFam" id="3.30.50.10:FF:000023">
    <property type="entry name" value="Vitamin D3 receptor"/>
    <property type="match status" value="1"/>
</dbReference>
<dbReference type="FunFam" id="1.10.565.10:FF:000021">
    <property type="entry name" value="Vitamin D3 receptor B"/>
    <property type="match status" value="1"/>
</dbReference>
<dbReference type="Gene3D" id="3.30.50.10">
    <property type="entry name" value="Erythroid Transcription Factor GATA-1, subunit A"/>
    <property type="match status" value="1"/>
</dbReference>
<dbReference type="Gene3D" id="1.10.565.10">
    <property type="entry name" value="Retinoid X Receptor"/>
    <property type="match status" value="1"/>
</dbReference>
<dbReference type="InterPro" id="IPR042153">
    <property type="entry name" value="DBD_VDR"/>
</dbReference>
<dbReference type="InterPro" id="IPR035500">
    <property type="entry name" value="NHR-like_dom_sf"/>
</dbReference>
<dbReference type="InterPro" id="IPR000536">
    <property type="entry name" value="Nucl_hrmn_rcpt_lig-bd"/>
</dbReference>
<dbReference type="InterPro" id="IPR050234">
    <property type="entry name" value="Nuclear_hormone_rcpt_NR1"/>
</dbReference>
<dbReference type="InterPro" id="IPR001723">
    <property type="entry name" value="Nuclear_hrmn_rcpt"/>
</dbReference>
<dbReference type="InterPro" id="IPR000324">
    <property type="entry name" value="VitD_rcpt"/>
</dbReference>
<dbReference type="InterPro" id="IPR001628">
    <property type="entry name" value="Znf_hrmn_rcpt"/>
</dbReference>
<dbReference type="InterPro" id="IPR013088">
    <property type="entry name" value="Znf_NHR/GATA"/>
</dbReference>
<dbReference type="PANTHER" id="PTHR24082">
    <property type="entry name" value="NUCLEAR HORMONE RECEPTOR"/>
    <property type="match status" value="1"/>
</dbReference>
<dbReference type="PANTHER" id="PTHR24082:SF38">
    <property type="entry name" value="VITAMIN D3 RECEPTOR"/>
    <property type="match status" value="1"/>
</dbReference>
<dbReference type="Pfam" id="PF00104">
    <property type="entry name" value="Hormone_recep"/>
    <property type="match status" value="1"/>
</dbReference>
<dbReference type="Pfam" id="PF00105">
    <property type="entry name" value="zf-C4"/>
    <property type="match status" value="1"/>
</dbReference>
<dbReference type="PRINTS" id="PR00398">
    <property type="entry name" value="STRDHORMONER"/>
</dbReference>
<dbReference type="PRINTS" id="PR00047">
    <property type="entry name" value="STROIDFINGER"/>
</dbReference>
<dbReference type="PRINTS" id="PR00350">
    <property type="entry name" value="VITAMINDR"/>
</dbReference>
<dbReference type="SMART" id="SM00430">
    <property type="entry name" value="HOLI"/>
    <property type="match status" value="1"/>
</dbReference>
<dbReference type="SMART" id="SM00399">
    <property type="entry name" value="ZnF_C4"/>
    <property type="match status" value="1"/>
</dbReference>
<dbReference type="SUPFAM" id="SSF57716">
    <property type="entry name" value="Glucocorticoid receptor-like (DNA-binding domain)"/>
    <property type="match status" value="1"/>
</dbReference>
<dbReference type="SUPFAM" id="SSF48508">
    <property type="entry name" value="Nuclear receptor ligand-binding domain"/>
    <property type="match status" value="1"/>
</dbReference>
<dbReference type="PROSITE" id="PS51843">
    <property type="entry name" value="NR_LBD"/>
    <property type="match status" value="1"/>
</dbReference>
<dbReference type="PROSITE" id="PS00031">
    <property type="entry name" value="NUCLEAR_REC_DBD_1"/>
    <property type="match status" value="1"/>
</dbReference>
<dbReference type="PROSITE" id="PS51030">
    <property type="entry name" value="NUCLEAR_REC_DBD_2"/>
    <property type="match status" value="1"/>
</dbReference>
<keyword id="KW-0963">Cytoplasm</keyword>
<keyword id="KW-0238">DNA-binding</keyword>
<keyword id="KW-0479">Metal-binding</keyword>
<keyword id="KW-0539">Nucleus</keyword>
<keyword id="KW-0675">Receptor</keyword>
<keyword id="KW-0804">Transcription</keyword>
<keyword id="KW-0805">Transcription regulation</keyword>
<keyword id="KW-0832">Ubl conjugation</keyword>
<keyword id="KW-0862">Zinc</keyword>
<keyword id="KW-0863">Zinc-finger</keyword>
<feature type="chain" id="PRO_0000053545" description="Vitamin D3 receptor">
    <location>
        <begin position="1"/>
        <end position="427"/>
    </location>
</feature>
<feature type="domain" description="NR LBD" evidence="4">
    <location>
        <begin position="127"/>
        <end position="423"/>
    </location>
</feature>
<feature type="DNA-binding region" description="Nuclear receptor" evidence="3">
    <location>
        <begin position="21"/>
        <end position="96"/>
    </location>
</feature>
<feature type="zinc finger region" description="NR C4-type" evidence="3">
    <location>
        <begin position="24"/>
        <end position="44"/>
    </location>
</feature>
<feature type="zinc finger region" description="NR C4-type" evidence="3">
    <location>
        <begin position="60"/>
        <end position="84"/>
    </location>
</feature>
<feature type="region of interest" description="Hinge" evidence="1">
    <location>
        <begin position="97"/>
        <end position="126"/>
    </location>
</feature>
<feature type="region of interest" description="Disordered" evidence="5">
    <location>
        <begin position="158"/>
        <end position="183"/>
    </location>
</feature>
<feature type="region of interest" description="Interaction with coactivator LXXLL motif" evidence="2">
    <location>
        <begin position="246"/>
        <end position="264"/>
    </location>
</feature>
<feature type="short sequence motif" description="9aaTAD" evidence="1">
    <location>
        <begin position="416"/>
        <end position="424"/>
    </location>
</feature>
<feature type="binding site" evidence="1">
    <location>
        <position position="24"/>
    </location>
    <ligand>
        <name>Zn(2+)</name>
        <dbReference type="ChEBI" id="CHEBI:29105"/>
        <label>1</label>
    </ligand>
</feature>
<feature type="binding site" evidence="1">
    <location>
        <position position="27"/>
    </location>
    <ligand>
        <name>Zn(2+)</name>
        <dbReference type="ChEBI" id="CHEBI:29105"/>
        <label>1</label>
    </ligand>
</feature>
<feature type="binding site" evidence="1">
    <location>
        <position position="41"/>
    </location>
    <ligand>
        <name>Zn(2+)</name>
        <dbReference type="ChEBI" id="CHEBI:29105"/>
        <label>1</label>
    </ligand>
</feature>
<feature type="binding site" evidence="1">
    <location>
        <position position="44"/>
    </location>
    <ligand>
        <name>Zn(2+)</name>
        <dbReference type="ChEBI" id="CHEBI:29105"/>
        <label>1</label>
    </ligand>
</feature>
<feature type="binding site" evidence="1">
    <location>
        <position position="60"/>
    </location>
    <ligand>
        <name>Zn(2+)</name>
        <dbReference type="ChEBI" id="CHEBI:29105"/>
        <label>2</label>
    </ligand>
</feature>
<feature type="binding site" evidence="1">
    <location>
        <position position="66"/>
    </location>
    <ligand>
        <name>Zn(2+)</name>
        <dbReference type="ChEBI" id="CHEBI:29105"/>
        <label>2</label>
    </ligand>
</feature>
<feature type="binding site" evidence="1">
    <location>
        <position position="76"/>
    </location>
    <ligand>
        <name>Zn(2+)</name>
        <dbReference type="ChEBI" id="CHEBI:29105"/>
        <label>2</label>
    </ligand>
</feature>
<feature type="binding site" evidence="1">
    <location>
        <position position="79"/>
    </location>
    <ligand>
        <name>Zn(2+)</name>
        <dbReference type="ChEBI" id="CHEBI:29105"/>
        <label>2</label>
    </ligand>
</feature>
<feature type="binding site" evidence="1">
    <location>
        <position position="143"/>
    </location>
    <ligand>
        <name>calcitriol</name>
        <dbReference type="ChEBI" id="CHEBI:17823"/>
    </ligand>
</feature>
<feature type="binding site" evidence="1">
    <location>
        <position position="237"/>
    </location>
    <ligand>
        <name>calcitriol</name>
        <dbReference type="ChEBI" id="CHEBI:17823"/>
    </ligand>
</feature>
<feature type="binding site" evidence="1">
    <location>
        <position position="274"/>
    </location>
    <ligand>
        <name>calcitriol</name>
        <dbReference type="ChEBI" id="CHEBI:17823"/>
    </ligand>
</feature>
<feature type="binding site" evidence="1">
    <location>
        <position position="278"/>
    </location>
    <ligand>
        <name>calcitriol</name>
        <dbReference type="ChEBI" id="CHEBI:17823"/>
    </ligand>
</feature>
<feature type="binding site" evidence="1">
    <location>
        <position position="305"/>
    </location>
    <ligand>
        <name>calcitriol</name>
        <dbReference type="ChEBI" id="CHEBI:17823"/>
    </ligand>
</feature>
<feature type="binding site" evidence="1">
    <location>
        <position position="397"/>
    </location>
    <ligand>
        <name>calcitriol</name>
        <dbReference type="ChEBI" id="CHEBI:17823"/>
    </ligand>
</feature>
<evidence type="ECO:0000250" key="1">
    <source>
        <dbReference type="UniProtKB" id="P11473"/>
    </source>
</evidence>
<evidence type="ECO:0000250" key="2">
    <source>
        <dbReference type="UniProtKB" id="P13053"/>
    </source>
</evidence>
<evidence type="ECO:0000255" key="3">
    <source>
        <dbReference type="PROSITE-ProRule" id="PRU00407"/>
    </source>
</evidence>
<evidence type="ECO:0000255" key="4">
    <source>
        <dbReference type="PROSITE-ProRule" id="PRU01189"/>
    </source>
</evidence>
<evidence type="ECO:0000256" key="5">
    <source>
        <dbReference type="SAM" id="MobiDB-lite"/>
    </source>
</evidence>
<evidence type="ECO:0000305" key="6"/>
<proteinExistence type="evidence at transcript level"/>